<dbReference type="EMBL" id="CU928164">
    <property type="protein sequence ID" value="CAR19207.1"/>
    <property type="molecule type" value="Genomic_DNA"/>
</dbReference>
<dbReference type="RefSeq" id="WP_000063508.1">
    <property type="nucleotide sequence ID" value="NC_011750.1"/>
</dbReference>
<dbReference type="RefSeq" id="YP_002409018.1">
    <property type="nucleotide sequence ID" value="NC_011750.1"/>
</dbReference>
<dbReference type="STRING" id="585057.ECIAI39_3088"/>
<dbReference type="KEGG" id="ect:ECIAI39_3088"/>
<dbReference type="PATRIC" id="fig|585057.6.peg.3202"/>
<dbReference type="HOGENOM" id="CLU_066437_0_0_6"/>
<dbReference type="Proteomes" id="UP000000749">
    <property type="component" value="Chromosome"/>
</dbReference>
<dbReference type="GO" id="GO:0005886">
    <property type="term" value="C:plasma membrane"/>
    <property type="evidence" value="ECO:0007669"/>
    <property type="project" value="UniProtKB-SubCell"/>
</dbReference>
<dbReference type="GO" id="GO:0015153">
    <property type="term" value="F:rhamnose transmembrane transporter activity"/>
    <property type="evidence" value="ECO:0007669"/>
    <property type="project" value="UniProtKB-UniRule"/>
</dbReference>
<dbReference type="GO" id="GO:0015293">
    <property type="term" value="F:symporter activity"/>
    <property type="evidence" value="ECO:0007669"/>
    <property type="project" value="UniProtKB-KW"/>
</dbReference>
<dbReference type="HAMAP" id="MF_01532">
    <property type="entry name" value="RhaT"/>
    <property type="match status" value="1"/>
</dbReference>
<dbReference type="InterPro" id="IPR004673">
    <property type="entry name" value="L-rhamnose-proton_sym_RhaT"/>
</dbReference>
<dbReference type="NCBIfam" id="NF010021">
    <property type="entry name" value="PRK13499.1-1"/>
    <property type="match status" value="1"/>
</dbReference>
<dbReference type="NCBIfam" id="NF010023">
    <property type="entry name" value="PRK13499.1-3"/>
    <property type="match status" value="1"/>
</dbReference>
<dbReference type="NCBIfam" id="TIGR00776">
    <property type="entry name" value="RhaT"/>
    <property type="match status" value="1"/>
</dbReference>
<dbReference type="Pfam" id="PF06379">
    <property type="entry name" value="RhaT"/>
    <property type="match status" value="1"/>
</dbReference>
<evidence type="ECO:0000255" key="1">
    <source>
        <dbReference type="HAMAP-Rule" id="MF_01532"/>
    </source>
</evidence>
<feature type="chain" id="PRO_1000193747" description="L-rhamnose-proton symporter">
    <location>
        <begin position="1"/>
        <end position="344"/>
    </location>
</feature>
<feature type="transmembrane region" description="Helical" evidence="1">
    <location>
        <begin position="4"/>
        <end position="24"/>
    </location>
</feature>
<feature type="transmembrane region" description="Helical" evidence="1">
    <location>
        <begin position="38"/>
        <end position="58"/>
    </location>
</feature>
<feature type="transmembrane region" description="Helical" evidence="1">
    <location>
        <begin position="68"/>
        <end position="88"/>
    </location>
</feature>
<feature type="transmembrane region" description="Helical" evidence="1">
    <location>
        <begin position="101"/>
        <end position="121"/>
    </location>
</feature>
<feature type="transmembrane region" description="Helical" evidence="1">
    <location>
        <begin position="137"/>
        <end position="157"/>
    </location>
</feature>
<feature type="transmembrane region" description="Helical" evidence="1">
    <location>
        <begin position="175"/>
        <end position="195"/>
    </location>
</feature>
<feature type="transmembrane region" description="Helical" evidence="1">
    <location>
        <begin position="214"/>
        <end position="234"/>
    </location>
</feature>
<feature type="transmembrane region" description="Helical" evidence="1">
    <location>
        <begin position="259"/>
        <end position="279"/>
    </location>
</feature>
<feature type="transmembrane region" description="Helical" evidence="1">
    <location>
        <begin position="290"/>
        <end position="310"/>
    </location>
</feature>
<feature type="transmembrane region" description="Helical" evidence="1">
    <location>
        <begin position="323"/>
        <end position="343"/>
    </location>
</feature>
<accession>B7NU99</accession>
<organism>
    <name type="scientific">Escherichia coli O7:K1 (strain IAI39 / ExPEC)</name>
    <dbReference type="NCBI Taxonomy" id="585057"/>
    <lineage>
        <taxon>Bacteria</taxon>
        <taxon>Pseudomonadati</taxon>
        <taxon>Pseudomonadota</taxon>
        <taxon>Gammaproteobacteria</taxon>
        <taxon>Enterobacterales</taxon>
        <taxon>Enterobacteriaceae</taxon>
        <taxon>Escherichia</taxon>
    </lineage>
</organism>
<keyword id="KW-0997">Cell inner membrane</keyword>
<keyword id="KW-1003">Cell membrane</keyword>
<keyword id="KW-0472">Membrane</keyword>
<keyword id="KW-0762">Sugar transport</keyword>
<keyword id="KW-0769">Symport</keyword>
<keyword id="KW-0812">Transmembrane</keyword>
<keyword id="KW-1133">Transmembrane helix</keyword>
<keyword id="KW-0813">Transport</keyword>
<sequence length="344" mass="37302">MSNAITMGIFWHLIGAASAACFYAPFKKVKKWSWETMWSVGGIVSWIILPWAISALLLPNFWAYYSSFSLSTLLPVFLFGAMWGIGNINYGLTMRYLGMSMGIGIAIGITLIVGTLMTPIINGNFDVLINTEGGRMTLLGVLVALIGVGIVTRAGQLKERKMGIKAEEFNLKKGLVLAVMCGIFSAGMSFAMNAAKPMHEAAAALGVDPLYVALPSYVVIMGGGAIINLGFCFIRLAKVKDLSLKADFSLAKPLIIHNVLLSALGGLMWYLQFFFYAWGHARIPAQYDYISWMLHMSFYVLCGGIVGLVLKEWNNAGRRPVTVLSLGCVVIIVAANIVGMGMAN</sequence>
<gene>
    <name evidence="1" type="primary">rhaT</name>
    <name type="ordered locus">ECIAI39_3088</name>
</gene>
<comment type="function">
    <text evidence="1">Uptake of L-rhamnose across the cytoplasmic membrane with the concomitant transport of protons into the cell (symport system).</text>
</comment>
<comment type="catalytic activity">
    <reaction evidence="1">
        <text>L-rhamnopyranose(in) + H(+)(in) = L-rhamnopyranose(out) + H(+)(out)</text>
        <dbReference type="Rhea" id="RHEA:29947"/>
        <dbReference type="ChEBI" id="CHEBI:15378"/>
        <dbReference type="ChEBI" id="CHEBI:62346"/>
    </reaction>
    <physiologicalReaction direction="right-to-left" evidence="1">
        <dbReference type="Rhea" id="RHEA:29949"/>
    </physiologicalReaction>
</comment>
<comment type="subcellular location">
    <subcellularLocation>
        <location evidence="1">Cell inner membrane</location>
        <topology evidence="1">Multi-pass membrane protein</topology>
    </subcellularLocation>
</comment>
<comment type="similarity">
    <text evidence="1">Belongs to the L-rhamnose transporter (TC 2.A.7.6) family.</text>
</comment>
<protein>
    <recommendedName>
        <fullName evidence="1">L-rhamnose-proton symporter</fullName>
    </recommendedName>
    <alternativeName>
        <fullName evidence="1">L-rhamnose-H(+) transport protein</fullName>
    </alternativeName>
</protein>
<name>RHAT_ECO7I</name>
<reference key="1">
    <citation type="journal article" date="2009" name="PLoS Genet.">
        <title>Organised genome dynamics in the Escherichia coli species results in highly diverse adaptive paths.</title>
        <authorList>
            <person name="Touchon M."/>
            <person name="Hoede C."/>
            <person name="Tenaillon O."/>
            <person name="Barbe V."/>
            <person name="Baeriswyl S."/>
            <person name="Bidet P."/>
            <person name="Bingen E."/>
            <person name="Bonacorsi S."/>
            <person name="Bouchier C."/>
            <person name="Bouvet O."/>
            <person name="Calteau A."/>
            <person name="Chiapello H."/>
            <person name="Clermont O."/>
            <person name="Cruveiller S."/>
            <person name="Danchin A."/>
            <person name="Diard M."/>
            <person name="Dossat C."/>
            <person name="Karoui M.E."/>
            <person name="Frapy E."/>
            <person name="Garry L."/>
            <person name="Ghigo J.M."/>
            <person name="Gilles A.M."/>
            <person name="Johnson J."/>
            <person name="Le Bouguenec C."/>
            <person name="Lescat M."/>
            <person name="Mangenot S."/>
            <person name="Martinez-Jehanne V."/>
            <person name="Matic I."/>
            <person name="Nassif X."/>
            <person name="Oztas S."/>
            <person name="Petit M.A."/>
            <person name="Pichon C."/>
            <person name="Rouy Z."/>
            <person name="Ruf C.S."/>
            <person name="Schneider D."/>
            <person name="Tourret J."/>
            <person name="Vacherie B."/>
            <person name="Vallenet D."/>
            <person name="Medigue C."/>
            <person name="Rocha E.P.C."/>
            <person name="Denamur E."/>
        </authorList>
    </citation>
    <scope>NUCLEOTIDE SEQUENCE [LARGE SCALE GENOMIC DNA]</scope>
    <source>
        <strain>IAI39 / ExPEC</strain>
    </source>
</reference>
<proteinExistence type="inferred from homology"/>